<reference key="1">
    <citation type="journal article" date="2003" name="Lancet">
        <title>Genome sequence of Vibrio parahaemolyticus: a pathogenic mechanism distinct from that of V. cholerae.</title>
        <authorList>
            <person name="Makino K."/>
            <person name="Oshima K."/>
            <person name="Kurokawa K."/>
            <person name="Yokoyama K."/>
            <person name="Uda T."/>
            <person name="Tagomori K."/>
            <person name="Iijima Y."/>
            <person name="Najima M."/>
            <person name="Nakano M."/>
            <person name="Yamashita A."/>
            <person name="Kubota Y."/>
            <person name="Kimura S."/>
            <person name="Yasunaga T."/>
            <person name="Honda T."/>
            <person name="Shinagawa H."/>
            <person name="Hattori M."/>
            <person name="Iida T."/>
        </authorList>
    </citation>
    <scope>NUCLEOTIDE SEQUENCE [LARGE SCALE GENOMIC DNA]</scope>
    <source>
        <strain>RIMD 2210633</strain>
    </source>
</reference>
<keyword id="KW-0032">Aminotransferase</keyword>
<keyword id="KW-0663">Pyridoxal phosphate</keyword>
<keyword id="KW-0808">Transferase</keyword>
<name>ECTB_VIBPA</name>
<proteinExistence type="inferred from homology"/>
<protein>
    <recommendedName>
        <fullName>Diaminobutyrate--2-oxoglutarate transaminase</fullName>
        <ecNumber>2.6.1.76</ecNumber>
    </recommendedName>
    <alternativeName>
        <fullName>DABA aminotransferase</fullName>
    </alternativeName>
    <alternativeName>
        <fullName>Diaminobutyrate--2-oxoglutarate aminotransferase</fullName>
    </alternativeName>
    <alternativeName>
        <fullName>L-2,4-diaminobutyric acid transaminase</fullName>
    </alternativeName>
</protein>
<accession>Q87NZ7</accession>
<organism>
    <name type="scientific">Vibrio parahaemolyticus serotype O3:K6 (strain RIMD 2210633)</name>
    <dbReference type="NCBI Taxonomy" id="223926"/>
    <lineage>
        <taxon>Bacteria</taxon>
        <taxon>Pseudomonadati</taxon>
        <taxon>Pseudomonadota</taxon>
        <taxon>Gammaproteobacteria</taxon>
        <taxon>Vibrionales</taxon>
        <taxon>Vibrionaceae</taxon>
        <taxon>Vibrio</taxon>
    </lineage>
</organism>
<feature type="chain" id="PRO_0000120531" description="Diaminobutyrate--2-oxoglutarate transaminase">
    <location>
        <begin position="1"/>
        <end position="421"/>
    </location>
</feature>
<feature type="modified residue" description="N6-(pyridoxal phosphate)lysine" evidence="2">
    <location>
        <position position="262"/>
    </location>
</feature>
<gene>
    <name type="primary">ectB</name>
    <name type="ordered locus">VP1721</name>
</gene>
<comment type="function">
    <text evidence="1">Catalyzes reversively the conversion of L-aspartate beta-semialdehyde (ASA) to L-2,4-diaminobutyrate (DABA) by transamination with L-glutamate.</text>
</comment>
<comment type="catalytic activity">
    <reaction>
        <text>L-2,4-diaminobutanoate + 2-oxoglutarate = L-aspartate 4-semialdehyde + L-glutamate</text>
        <dbReference type="Rhea" id="RHEA:11160"/>
        <dbReference type="ChEBI" id="CHEBI:16810"/>
        <dbReference type="ChEBI" id="CHEBI:29985"/>
        <dbReference type="ChEBI" id="CHEBI:58761"/>
        <dbReference type="ChEBI" id="CHEBI:537519"/>
        <dbReference type="EC" id="2.6.1.76"/>
    </reaction>
</comment>
<comment type="cofactor">
    <cofactor evidence="1">
        <name>pyridoxal 5'-phosphate</name>
        <dbReference type="ChEBI" id="CHEBI:597326"/>
    </cofactor>
</comment>
<comment type="pathway">
    <text>Amine and polyamine biosynthesis; ectoine biosynthesis; L-ectoine from L-aspartate 4-semialdehyde: step 1/3.</text>
</comment>
<comment type="similarity">
    <text evidence="3">Belongs to the class-III pyridoxal-phosphate-dependent aminotransferase family.</text>
</comment>
<evidence type="ECO:0000250" key="1"/>
<evidence type="ECO:0000255" key="2"/>
<evidence type="ECO:0000305" key="3"/>
<sequence>MDIFKKQESNVRSYSNNFPVVFRKAKGCWLETEQGERYLDFLAGAGSLNYGHNNPVLKQALLEYIEMDGITHGLDMHSEAKAGFLAALDNYILKPRKLDYKVQFTGPTGTNAVEAALKLAKKVKGRSSVVAFTNGFHGCTAGALAATGNQHHRQGNGSSLTNVTRIPFEGYAGVDGLALFETMLNDNSAGMDKPAAVLLETVQGEGGLNAASNEWLQRLSKICKANDILLIVDDIQAGCGRTGTFFSFEPSGIEPDIVTLSKSIGGYGLPMAVVLLKPELDQWKPGEHNGTFRGNNHAFITAAKALEIYWSNDDFETHIKQCSQNVSEVIDRCVRRFPQMFVQKKGRGMMIGIECIHGDLAAEIAKACFDDGMVIETAGPDDEVVKFFCPLTISESELNQGLSIFERAVETIAAKHFKQAS</sequence>
<dbReference type="EC" id="2.6.1.76"/>
<dbReference type="EMBL" id="BA000031">
    <property type="protein sequence ID" value="BAC59984.1"/>
    <property type="molecule type" value="Genomic_DNA"/>
</dbReference>
<dbReference type="RefSeq" id="NP_798100.1">
    <property type="nucleotide sequence ID" value="NC_004603.1"/>
</dbReference>
<dbReference type="RefSeq" id="WP_005464458.1">
    <property type="nucleotide sequence ID" value="NC_004603.1"/>
</dbReference>
<dbReference type="SMR" id="Q87NZ7"/>
<dbReference type="GeneID" id="1189228"/>
<dbReference type="KEGG" id="vpa:VP1721"/>
<dbReference type="PATRIC" id="fig|223926.6.peg.1641"/>
<dbReference type="eggNOG" id="COG0160">
    <property type="taxonomic scope" value="Bacteria"/>
</dbReference>
<dbReference type="HOGENOM" id="CLU_016922_10_0_6"/>
<dbReference type="UniPathway" id="UPA00067">
    <property type="reaction ID" value="UER00121"/>
</dbReference>
<dbReference type="Proteomes" id="UP000002493">
    <property type="component" value="Chromosome 1"/>
</dbReference>
<dbReference type="GO" id="GO:0045303">
    <property type="term" value="F:diaminobutyrate-2-oxoglutarate transaminase activity"/>
    <property type="evidence" value="ECO:0007669"/>
    <property type="project" value="UniProtKB-EC"/>
</dbReference>
<dbReference type="GO" id="GO:0047307">
    <property type="term" value="F:diaminobutyrate-pyruvate transaminase activity"/>
    <property type="evidence" value="ECO:0007669"/>
    <property type="project" value="InterPro"/>
</dbReference>
<dbReference type="GO" id="GO:0030170">
    <property type="term" value="F:pyridoxal phosphate binding"/>
    <property type="evidence" value="ECO:0007669"/>
    <property type="project" value="InterPro"/>
</dbReference>
<dbReference type="GO" id="GO:0019491">
    <property type="term" value="P:ectoine biosynthetic process"/>
    <property type="evidence" value="ECO:0007669"/>
    <property type="project" value="UniProtKB-UniPathway"/>
</dbReference>
<dbReference type="CDD" id="cd00610">
    <property type="entry name" value="OAT_like"/>
    <property type="match status" value="1"/>
</dbReference>
<dbReference type="Gene3D" id="3.90.1150.10">
    <property type="entry name" value="Aspartate Aminotransferase, domain 1"/>
    <property type="match status" value="1"/>
</dbReference>
<dbReference type="Gene3D" id="3.40.640.10">
    <property type="entry name" value="Type I PLP-dependent aspartate aminotransferase-like (Major domain)"/>
    <property type="match status" value="1"/>
</dbReference>
<dbReference type="InterPro" id="IPR005814">
    <property type="entry name" value="Aminotrans_3"/>
</dbReference>
<dbReference type="InterPro" id="IPR049704">
    <property type="entry name" value="Aminotrans_3_PPA_site"/>
</dbReference>
<dbReference type="InterPro" id="IPR004637">
    <property type="entry name" value="Dat"/>
</dbReference>
<dbReference type="InterPro" id="IPR012773">
    <property type="entry name" value="Ectoine_EctB"/>
</dbReference>
<dbReference type="InterPro" id="IPR015424">
    <property type="entry name" value="PyrdxlP-dep_Trfase"/>
</dbReference>
<dbReference type="InterPro" id="IPR015421">
    <property type="entry name" value="PyrdxlP-dep_Trfase_major"/>
</dbReference>
<dbReference type="InterPro" id="IPR015422">
    <property type="entry name" value="PyrdxlP-dep_Trfase_small"/>
</dbReference>
<dbReference type="NCBIfam" id="TIGR00709">
    <property type="entry name" value="dat"/>
    <property type="match status" value="1"/>
</dbReference>
<dbReference type="NCBIfam" id="TIGR02407">
    <property type="entry name" value="ectoine_ectB"/>
    <property type="match status" value="1"/>
</dbReference>
<dbReference type="NCBIfam" id="NF006733">
    <property type="entry name" value="PRK09264.1"/>
    <property type="match status" value="1"/>
</dbReference>
<dbReference type="PANTHER" id="PTHR43552">
    <property type="entry name" value="DIAMINOBUTYRATE--2-OXOGLUTARATE AMINOTRANSFERASE"/>
    <property type="match status" value="1"/>
</dbReference>
<dbReference type="PANTHER" id="PTHR43552:SF2">
    <property type="entry name" value="DIAMINOBUTYRATE--2-OXOGLUTARATE TRANSAMINASE"/>
    <property type="match status" value="1"/>
</dbReference>
<dbReference type="Pfam" id="PF00202">
    <property type="entry name" value="Aminotran_3"/>
    <property type="match status" value="1"/>
</dbReference>
<dbReference type="PIRSF" id="PIRSF000521">
    <property type="entry name" value="Transaminase_4ab_Lys_Orn"/>
    <property type="match status" value="1"/>
</dbReference>
<dbReference type="SUPFAM" id="SSF53383">
    <property type="entry name" value="PLP-dependent transferases"/>
    <property type="match status" value="1"/>
</dbReference>
<dbReference type="PROSITE" id="PS00600">
    <property type="entry name" value="AA_TRANSFER_CLASS_3"/>
    <property type="match status" value="1"/>
</dbReference>